<name>YABR_ECOLI</name>
<dbReference type="EMBL" id="U00096">
    <property type="protein sequence ID" value="AYC08164.1"/>
    <property type="molecule type" value="Genomic_DNA"/>
</dbReference>
<dbReference type="EnsemblBacteria" id="AYC08164">
    <property type="protein sequence ID" value="AYC08164"/>
    <property type="gene ID" value="b4726"/>
</dbReference>
<dbReference type="InParanoid" id="P0DPM5"/>
<dbReference type="BioCyc" id="EcoCyc:MONOMER0-4403"/>
<dbReference type="PRO" id="PR:P0DPM5"/>
<dbReference type="Proteomes" id="UP000000625">
    <property type="component" value="Chromosome"/>
</dbReference>
<organism>
    <name type="scientific">Escherichia coli (strain K12)</name>
    <dbReference type="NCBI Taxonomy" id="83333"/>
    <lineage>
        <taxon>Bacteria</taxon>
        <taxon>Pseudomonadati</taxon>
        <taxon>Pseudomonadota</taxon>
        <taxon>Gammaproteobacteria</taxon>
        <taxon>Enterobacterales</taxon>
        <taxon>Enterobacteriaceae</taxon>
        <taxon>Escherichia</taxon>
    </lineage>
</organism>
<gene>
    <name evidence="2" type="primary">yabR</name>
    <name type="ordered locus">b4726</name>
</gene>
<keyword id="KW-1185">Reference proteome</keyword>
<proteinExistence type="evidence at protein level"/>
<reference key="1">
    <citation type="journal article" date="1997" name="Science">
        <title>The complete genome sequence of Escherichia coli K-12.</title>
        <authorList>
            <person name="Blattner F.R."/>
            <person name="Plunkett G. III"/>
            <person name="Bloch C.A."/>
            <person name="Perna N.T."/>
            <person name="Burland V."/>
            <person name="Riley M."/>
            <person name="Collado-Vides J."/>
            <person name="Glasner J.D."/>
            <person name="Rode C.K."/>
            <person name="Mayhew G.F."/>
            <person name="Gregor J."/>
            <person name="Davis N.W."/>
            <person name="Kirkpatrick H.A."/>
            <person name="Goeden M.A."/>
            <person name="Rose D.J."/>
            <person name="Mau B."/>
            <person name="Shao Y."/>
        </authorList>
    </citation>
    <scope>NUCLEOTIDE SEQUENCE [LARGE SCALE GENOMIC DNA]</scope>
    <source>
        <strain>K12 / MG1655 / ATCC 47076</strain>
    </source>
</reference>
<reference key="2">
    <citation type="journal article" date="2018" name="Proteomics">
        <title>Identifying new small proteins in Escherichia coli.</title>
        <authorList>
            <person name="VanOrsdel C.E."/>
            <person name="Kelly J.P."/>
            <person name="Burke B.N."/>
            <person name="Lein C.D."/>
            <person name="Oufiero C.E."/>
            <person name="Sanchez J.F."/>
            <person name="Wimmers L.E."/>
            <person name="Hearn D.J."/>
            <person name="Abuikhdair F.J."/>
            <person name="Barnhart K.R."/>
            <person name="Duley M.L."/>
            <person name="Ernst S.E.G."/>
            <person name="Kenerson B.A."/>
            <person name="Serafin A.J."/>
            <person name="Hemm M.R."/>
        </authorList>
    </citation>
    <scope>IDENTIFICATION</scope>
    <scope>INDUCTION</scope>
</reference>
<evidence type="ECO:0000269" key="1">
    <source>
    </source>
</evidence>
<evidence type="ECO:0000303" key="2">
    <source>
    </source>
</evidence>
<comment type="induction">
    <text evidence="1">Expressed at low levels in stationary phase (at protein level).</text>
</comment>
<feature type="chain" id="PRO_0000445153" description="Protein YabR">
    <location>
        <begin position="1"/>
        <end position="14"/>
    </location>
</feature>
<accession>P0DPM5</accession>
<accession>A0A385XJA8</accession>
<sequence length="14" mass="1758">MKRNDKILHYRGLN</sequence>
<protein>
    <recommendedName>
        <fullName evidence="2">Protein YabR</fullName>
    </recommendedName>
</protein>